<comment type="catalytic activity">
    <reaction>
        <text>(1S,2R)-1-C-(indol-3-yl)glycerol 3-phosphate + L-serine = D-glyceraldehyde 3-phosphate + L-tryptophan + H2O</text>
        <dbReference type="Rhea" id="RHEA:10532"/>
        <dbReference type="ChEBI" id="CHEBI:15377"/>
        <dbReference type="ChEBI" id="CHEBI:33384"/>
        <dbReference type="ChEBI" id="CHEBI:57912"/>
        <dbReference type="ChEBI" id="CHEBI:58866"/>
        <dbReference type="ChEBI" id="CHEBI:59776"/>
        <dbReference type="EC" id="4.2.1.20"/>
    </reaction>
</comment>
<comment type="cofactor">
    <cofactor>
        <name>pyridoxal 5'-phosphate</name>
        <dbReference type="ChEBI" id="CHEBI:597326"/>
    </cofactor>
</comment>
<comment type="pathway">
    <text>Amino-acid biosynthesis; L-tryptophan biosynthesis; L-tryptophan from chorismate: step 5/5.</text>
</comment>
<comment type="similarity">
    <text evidence="2">In the N-terminal section; belongs to the TrpA family.</text>
</comment>
<comment type="similarity">
    <text evidence="2">In the C-terminal section; belongs to the TrpB family.</text>
</comment>
<gene>
    <name type="primary">trp-3</name>
    <name type="ORF">NCU08409</name>
</gene>
<feature type="chain" id="PRO_0000098724" description="Tryptophan synthase">
    <location>
        <begin position="1"/>
        <end position="708"/>
    </location>
</feature>
<feature type="region of interest" description="Tryptophan synthase alpha chain">
    <location>
        <begin position="1"/>
        <end position="305"/>
    </location>
</feature>
<feature type="region of interest" description="Tryptophan synthase beta chain">
    <location>
        <begin position="306"/>
        <end position="708"/>
    </location>
</feature>
<feature type="active site" description="Proton acceptor" evidence="1">
    <location>
        <position position="49"/>
    </location>
</feature>
<feature type="active site" description="Proton acceptor" evidence="1">
    <location>
        <position position="60"/>
    </location>
</feature>
<feature type="modified residue" description="N6-(pyridoxal phosphate)lysine">
    <location>
        <position position="392"/>
    </location>
</feature>
<feature type="sequence variant" description="In strain: 314-448A.">
    <original>A</original>
    <variation>ATA</variation>
    <location>
        <position position="67"/>
    </location>
</feature>
<organism>
    <name type="scientific">Neurospora crassa (strain ATCC 24698 / 74-OR23-1A / CBS 708.71 / DSM 1257 / FGSC 987)</name>
    <dbReference type="NCBI Taxonomy" id="367110"/>
    <lineage>
        <taxon>Eukaryota</taxon>
        <taxon>Fungi</taxon>
        <taxon>Dikarya</taxon>
        <taxon>Ascomycota</taxon>
        <taxon>Pezizomycotina</taxon>
        <taxon>Sordariomycetes</taxon>
        <taxon>Sordariomycetidae</taxon>
        <taxon>Sordariales</taxon>
        <taxon>Sordariaceae</taxon>
        <taxon>Neurospora</taxon>
    </lineage>
</organism>
<evidence type="ECO:0000250" key="1"/>
<evidence type="ECO:0000305" key="2"/>
<keyword id="KW-0028">Amino-acid biosynthesis</keyword>
<keyword id="KW-0057">Aromatic amino acid biosynthesis</keyword>
<keyword id="KW-0903">Direct protein sequencing</keyword>
<keyword id="KW-0456">Lyase</keyword>
<keyword id="KW-0663">Pyridoxal phosphate</keyword>
<keyword id="KW-1185">Reference proteome</keyword>
<keyword id="KW-0822">Tryptophan biosynthesis</keyword>
<protein>
    <recommendedName>
        <fullName>Tryptophan synthase</fullName>
        <ecNumber>4.2.1.20</ecNumber>
    </recommendedName>
</protein>
<name>TRP_NEUCR</name>
<reference key="1">
    <citation type="journal article" date="1989" name="J. Biol. Chem.">
        <title>Nucleotide sequence of the Neurospora crassa trp-3 gene encoding tryptophan synthetase and comparison of the trp-3 polypeptide with its homologs in Saccharomyces cerevisiae and Escherichia coli.</title>
        <authorList>
            <person name="Burns D.M."/>
            <person name="Yanofsky C."/>
        </authorList>
    </citation>
    <scope>NUCLEOTIDE SEQUENCE [GENOMIC DNA]</scope>
</reference>
<reference key="2">
    <citation type="journal article" date="2003" name="Nature">
        <title>The genome sequence of the filamentous fungus Neurospora crassa.</title>
        <authorList>
            <person name="Galagan J.E."/>
            <person name="Calvo S.E."/>
            <person name="Borkovich K.A."/>
            <person name="Selker E.U."/>
            <person name="Read N.D."/>
            <person name="Jaffe D.B."/>
            <person name="FitzHugh W."/>
            <person name="Ma L.-J."/>
            <person name="Smirnov S."/>
            <person name="Purcell S."/>
            <person name="Rehman B."/>
            <person name="Elkins T."/>
            <person name="Engels R."/>
            <person name="Wang S."/>
            <person name="Nielsen C.B."/>
            <person name="Butler J."/>
            <person name="Endrizzi M."/>
            <person name="Qui D."/>
            <person name="Ianakiev P."/>
            <person name="Bell-Pedersen D."/>
            <person name="Nelson M.A."/>
            <person name="Werner-Washburne M."/>
            <person name="Selitrennikoff C.P."/>
            <person name="Kinsey J.A."/>
            <person name="Braun E.L."/>
            <person name="Zelter A."/>
            <person name="Schulte U."/>
            <person name="Kothe G.O."/>
            <person name="Jedd G."/>
            <person name="Mewes H.-W."/>
            <person name="Staben C."/>
            <person name="Marcotte E."/>
            <person name="Greenberg D."/>
            <person name="Roy A."/>
            <person name="Foley K."/>
            <person name="Naylor J."/>
            <person name="Stange-Thomann N."/>
            <person name="Barrett R."/>
            <person name="Gnerre S."/>
            <person name="Kamal M."/>
            <person name="Kamvysselis M."/>
            <person name="Mauceli E.W."/>
            <person name="Bielke C."/>
            <person name="Rudd S."/>
            <person name="Frishman D."/>
            <person name="Krystofova S."/>
            <person name="Rasmussen C."/>
            <person name="Metzenberg R.L."/>
            <person name="Perkins D.D."/>
            <person name="Kroken S."/>
            <person name="Cogoni C."/>
            <person name="Macino G."/>
            <person name="Catcheside D.E.A."/>
            <person name="Li W."/>
            <person name="Pratt R.J."/>
            <person name="Osmani S.A."/>
            <person name="DeSouza C.P.C."/>
            <person name="Glass N.L."/>
            <person name="Orbach M.J."/>
            <person name="Berglund J.A."/>
            <person name="Voelker R."/>
            <person name="Yarden O."/>
            <person name="Plamann M."/>
            <person name="Seiler S."/>
            <person name="Dunlap J.C."/>
            <person name="Radford A."/>
            <person name="Aramayo R."/>
            <person name="Natvig D.O."/>
            <person name="Alex L.A."/>
            <person name="Mannhaupt G."/>
            <person name="Ebbole D.J."/>
            <person name="Freitag M."/>
            <person name="Paulsen I."/>
            <person name="Sachs M.S."/>
            <person name="Lander E.S."/>
            <person name="Nusbaum C."/>
            <person name="Birren B.W."/>
        </authorList>
    </citation>
    <scope>NUCLEOTIDE SEQUENCE [LARGE SCALE GENOMIC DNA]</scope>
    <source>
        <strain>ATCC 24698 / 74-OR23-1A / CBS 708.71 / DSM 1257 / FGSC 987</strain>
    </source>
</reference>
<reference key="3">
    <citation type="submission" date="1998-08" db="EMBL/GenBank/DDBJ databases">
        <title>Distribution, nature, and possible significance of the base substitutions in 27 well characterized mutants of the trp-3 (tryptophan synthase) gene of Neurospora crassa.</title>
        <authorList>
            <person name="Lacy A.M."/>
            <person name="Case M.E."/>
            <person name="Nelson W.S."/>
        </authorList>
    </citation>
    <scope>NUCLEOTIDE SEQUENCE [GENOMIC DNA] OF 1-129</scope>
    <source>
        <strain>314-448A</strain>
    </source>
</reference>
<reference key="4">
    <citation type="journal article" date="1988" name="J. Biol. Chem.">
        <title>Neurospora tryptophan synthase. Characterization of the pyridoxal phosphate binding site.</title>
        <authorList>
            <person name="Pratt M.L."/>
            <person name="Demoss J.A."/>
        </authorList>
    </citation>
    <scope>PROTEIN SEQUENCE OF 358-397</scope>
    <scope>PYRIDOXAL PHOSPHATE AT LYS-392</scope>
</reference>
<accession>P13228</accession>
<accession>O93879</accession>
<accession>Q7RVI6</accession>
<sequence>MEGIKQTFQRCKAQNRAALVTYVTAGFPHPEQTPDILLAMEKGGADVIELGVPFTDPIADGPTIQTANTIALQHGVTLQSTLQMVRDARQRGLKAPVMLMGYYNPLLSYGEERLLNDCKEAGVNGFIIVDLPPEEAVSFRQLCTRGGLSYVPLIAPATSDARMRVLCQLADSFIYVVSRQGVTGASGTLNANLPELLARVKKYSGNKPAAVGFGVSTHDHFTQVGAIADGVVVGSMIITTIQKAAKGEEVKAVQEYCSYLCGRNFEQSAHELNMGEALEAAKEPVGTATVDGVITEADIDAQLAALHGTIPKRFGEFGGQYVPEALMDCLSELEEGFNKIKDDPAFWEEYRSYYPWMGRPGQLHKAERLTEYAGGANIWLKREDLNHTGSHKINNALGQLLLARRLGKKKIIAETGAGQHGVATATVCAKFGMECTVFMGAEDVRRQALNVFRMKLLGAKVVAVEAGSRTLRDAVNEALRYWVVNLADTHYIIGSAIGPHPFPTIVRTFQSVIGNETKQQMLEKRGKLPDAVVACVGGGSNAVGMFYPFSNDPSVKLLGVEAGGDGVDTPRHSATLTAGSKGVLHGVRTYILQNQYGQIEDTHSISAGLDYPGVGPELSNWKDTERAKFVAATDAQAFEGFRLMSQLEGIIPALESSHGIWGALELAKTMKPDEDVVICLSGRGDKDVQSVADELPIIGPKIGWDLRF</sequence>
<proteinExistence type="evidence at protein level"/>
<dbReference type="EC" id="4.2.1.20"/>
<dbReference type="EMBL" id="J04594">
    <property type="protein sequence ID" value="AAA33616.1"/>
    <property type="molecule type" value="Genomic_DNA"/>
</dbReference>
<dbReference type="EMBL" id="CM002237">
    <property type="protein sequence ID" value="EAA34045.1"/>
    <property type="molecule type" value="Genomic_DNA"/>
</dbReference>
<dbReference type="EMBL" id="AF084886">
    <property type="protein sequence ID" value="AAD04354.1"/>
    <property type="molecule type" value="Genomic_DNA"/>
</dbReference>
<dbReference type="PIR" id="A32959">
    <property type="entry name" value="A32959"/>
</dbReference>
<dbReference type="RefSeq" id="XP_963281.1">
    <property type="nucleotide sequence ID" value="XM_958188.2"/>
</dbReference>
<dbReference type="SMR" id="P13228"/>
<dbReference type="FunCoup" id="P13228">
    <property type="interactions" value="444"/>
</dbReference>
<dbReference type="STRING" id="367110.P13228"/>
<dbReference type="PaxDb" id="5141-EFNCRP00000007806"/>
<dbReference type="EnsemblFungi" id="EAA34045">
    <property type="protein sequence ID" value="EAA34045"/>
    <property type="gene ID" value="NCU08409"/>
</dbReference>
<dbReference type="GeneID" id="3879436"/>
<dbReference type="KEGG" id="ncr:NCU08409"/>
<dbReference type="VEuPathDB" id="FungiDB:NCU08409"/>
<dbReference type="HOGENOM" id="CLU_016734_1_0_1"/>
<dbReference type="InParanoid" id="P13228"/>
<dbReference type="OMA" id="VDTARHS"/>
<dbReference type="OrthoDB" id="10050244at2759"/>
<dbReference type="UniPathway" id="UPA00035">
    <property type="reaction ID" value="UER00044"/>
</dbReference>
<dbReference type="Proteomes" id="UP000001805">
    <property type="component" value="Chromosome 6, Linkage Group II"/>
</dbReference>
<dbReference type="GO" id="GO:0005737">
    <property type="term" value="C:cytoplasm"/>
    <property type="evidence" value="ECO:0000318"/>
    <property type="project" value="GO_Central"/>
</dbReference>
<dbReference type="GO" id="GO:0004834">
    <property type="term" value="F:tryptophan synthase activity"/>
    <property type="evidence" value="ECO:0007669"/>
    <property type="project" value="UniProtKB-EC"/>
</dbReference>
<dbReference type="GO" id="GO:0000162">
    <property type="term" value="P:L-tryptophan biosynthetic process"/>
    <property type="evidence" value="ECO:0000318"/>
    <property type="project" value="GO_Central"/>
</dbReference>
<dbReference type="CDD" id="cd06446">
    <property type="entry name" value="Trp-synth_B"/>
    <property type="match status" value="1"/>
</dbReference>
<dbReference type="CDD" id="cd04724">
    <property type="entry name" value="Tryptophan_synthase_alpha"/>
    <property type="match status" value="1"/>
</dbReference>
<dbReference type="FunFam" id="3.20.20.70:FF:000151">
    <property type="entry name" value="Tryptophan synthase"/>
    <property type="match status" value="1"/>
</dbReference>
<dbReference type="FunFam" id="3.40.50.1100:FF:000001">
    <property type="entry name" value="Tryptophan synthase beta chain"/>
    <property type="match status" value="1"/>
</dbReference>
<dbReference type="FunFam" id="3.40.50.1100:FF:000004">
    <property type="entry name" value="Tryptophan synthase beta chain"/>
    <property type="match status" value="1"/>
</dbReference>
<dbReference type="Gene3D" id="3.40.50.1100">
    <property type="match status" value="2"/>
</dbReference>
<dbReference type="Gene3D" id="3.20.20.70">
    <property type="entry name" value="Aldolase class I"/>
    <property type="match status" value="1"/>
</dbReference>
<dbReference type="HAMAP" id="MF_00131">
    <property type="entry name" value="Trp_synth_alpha"/>
    <property type="match status" value="1"/>
</dbReference>
<dbReference type="HAMAP" id="MF_00133">
    <property type="entry name" value="Trp_synth_beta"/>
    <property type="match status" value="1"/>
</dbReference>
<dbReference type="InterPro" id="IPR013785">
    <property type="entry name" value="Aldolase_TIM"/>
</dbReference>
<dbReference type="InterPro" id="IPR011060">
    <property type="entry name" value="RibuloseP-bd_barrel"/>
</dbReference>
<dbReference type="InterPro" id="IPR006653">
    <property type="entry name" value="Trp_synth_b_CS"/>
</dbReference>
<dbReference type="InterPro" id="IPR006654">
    <property type="entry name" value="Trp_synth_beta"/>
</dbReference>
<dbReference type="InterPro" id="IPR023026">
    <property type="entry name" value="Trp_synth_beta/beta-like"/>
</dbReference>
<dbReference type="InterPro" id="IPR018204">
    <property type="entry name" value="Trp_synthase_alpha_AS"/>
</dbReference>
<dbReference type="InterPro" id="IPR002028">
    <property type="entry name" value="Trp_synthase_suA"/>
</dbReference>
<dbReference type="InterPro" id="IPR001926">
    <property type="entry name" value="TrpB-like_PALP"/>
</dbReference>
<dbReference type="InterPro" id="IPR036052">
    <property type="entry name" value="TrpB-like_PALP_sf"/>
</dbReference>
<dbReference type="NCBIfam" id="TIGR00262">
    <property type="entry name" value="trpA"/>
    <property type="match status" value="1"/>
</dbReference>
<dbReference type="NCBIfam" id="TIGR00263">
    <property type="entry name" value="trpB"/>
    <property type="match status" value="1"/>
</dbReference>
<dbReference type="PANTHER" id="PTHR48077:SF3">
    <property type="entry name" value="TRYPTOPHAN SYNTHASE"/>
    <property type="match status" value="1"/>
</dbReference>
<dbReference type="PANTHER" id="PTHR48077">
    <property type="entry name" value="TRYPTOPHAN SYNTHASE-RELATED"/>
    <property type="match status" value="1"/>
</dbReference>
<dbReference type="Pfam" id="PF00291">
    <property type="entry name" value="PALP"/>
    <property type="match status" value="1"/>
</dbReference>
<dbReference type="Pfam" id="PF00290">
    <property type="entry name" value="Trp_syntA"/>
    <property type="match status" value="1"/>
</dbReference>
<dbReference type="SUPFAM" id="SSF51366">
    <property type="entry name" value="Ribulose-phoshate binding barrel"/>
    <property type="match status" value="1"/>
</dbReference>
<dbReference type="SUPFAM" id="SSF53686">
    <property type="entry name" value="Tryptophan synthase beta subunit-like PLP-dependent enzymes"/>
    <property type="match status" value="1"/>
</dbReference>
<dbReference type="PROSITE" id="PS00167">
    <property type="entry name" value="TRP_SYNTHASE_ALPHA"/>
    <property type="match status" value="1"/>
</dbReference>
<dbReference type="PROSITE" id="PS00168">
    <property type="entry name" value="TRP_SYNTHASE_BETA"/>
    <property type="match status" value="1"/>
</dbReference>